<reference key="1">
    <citation type="journal article" date="2006" name="Proc. Natl. Acad. Sci. U.S.A.">
        <title>Comparative genomics of the lactic acid bacteria.</title>
        <authorList>
            <person name="Makarova K.S."/>
            <person name="Slesarev A."/>
            <person name="Wolf Y.I."/>
            <person name="Sorokin A."/>
            <person name="Mirkin B."/>
            <person name="Koonin E.V."/>
            <person name="Pavlov A."/>
            <person name="Pavlova N."/>
            <person name="Karamychev V."/>
            <person name="Polouchine N."/>
            <person name="Shakhova V."/>
            <person name="Grigoriev I."/>
            <person name="Lou Y."/>
            <person name="Rohksar D."/>
            <person name="Lucas S."/>
            <person name="Huang K."/>
            <person name="Goodstein D.M."/>
            <person name="Hawkins T."/>
            <person name="Plengvidhya V."/>
            <person name="Welker D."/>
            <person name="Hughes J."/>
            <person name="Goh Y."/>
            <person name="Benson A."/>
            <person name="Baldwin K."/>
            <person name="Lee J.-H."/>
            <person name="Diaz-Muniz I."/>
            <person name="Dosti B."/>
            <person name="Smeianov V."/>
            <person name="Wechter W."/>
            <person name="Barabote R."/>
            <person name="Lorca G."/>
            <person name="Altermann E."/>
            <person name="Barrangou R."/>
            <person name="Ganesan B."/>
            <person name="Xie Y."/>
            <person name="Rawsthorne H."/>
            <person name="Tamir D."/>
            <person name="Parker C."/>
            <person name="Breidt F."/>
            <person name="Broadbent J.R."/>
            <person name="Hutkins R."/>
            <person name="O'Sullivan D."/>
            <person name="Steele J."/>
            <person name="Unlu G."/>
            <person name="Saier M.H. Jr."/>
            <person name="Klaenhammer T."/>
            <person name="Richardson P."/>
            <person name="Kozyavkin S."/>
            <person name="Weimer B.C."/>
            <person name="Mills D.A."/>
        </authorList>
    </citation>
    <scope>NUCLEOTIDE SEQUENCE [LARGE SCALE GENOMIC DNA]</scope>
    <source>
        <strain>ATCC 334 / BCRC 17002 / CCUG 31169 / CIP 107868 / KCTC 3260 / NRRL B-441</strain>
    </source>
</reference>
<evidence type="ECO:0000255" key="1">
    <source>
        <dbReference type="HAMAP-Rule" id="MF_01080"/>
    </source>
</evidence>
<comment type="function">
    <text evidence="1">Responsible for synthesis of pseudouridine from uracil-55 in the psi GC loop of transfer RNAs.</text>
</comment>
<comment type="catalytic activity">
    <reaction evidence="1">
        <text>uridine(55) in tRNA = pseudouridine(55) in tRNA</text>
        <dbReference type="Rhea" id="RHEA:42532"/>
        <dbReference type="Rhea" id="RHEA-COMP:10101"/>
        <dbReference type="Rhea" id="RHEA-COMP:10102"/>
        <dbReference type="ChEBI" id="CHEBI:65314"/>
        <dbReference type="ChEBI" id="CHEBI:65315"/>
        <dbReference type="EC" id="5.4.99.25"/>
    </reaction>
</comment>
<comment type="similarity">
    <text evidence="1">Belongs to the pseudouridine synthase TruB family. Type 1 subfamily.</text>
</comment>
<name>TRUB_LACP3</name>
<organism>
    <name type="scientific">Lacticaseibacillus paracasei (strain ATCC 334 / BCRC 17002 / CCUG 31169 / CIP 107868 / KCTC 3260 / NRRL B-441)</name>
    <name type="common">Lactobacillus paracasei</name>
    <dbReference type="NCBI Taxonomy" id="321967"/>
    <lineage>
        <taxon>Bacteria</taxon>
        <taxon>Bacillati</taxon>
        <taxon>Bacillota</taxon>
        <taxon>Bacilli</taxon>
        <taxon>Lactobacillales</taxon>
        <taxon>Lactobacillaceae</taxon>
        <taxon>Lacticaseibacillus</taxon>
    </lineage>
</organism>
<gene>
    <name evidence="1" type="primary">truB</name>
    <name type="ordered locus">LSEI_1570</name>
</gene>
<keyword id="KW-0413">Isomerase</keyword>
<keyword id="KW-1185">Reference proteome</keyword>
<keyword id="KW-0819">tRNA processing</keyword>
<protein>
    <recommendedName>
        <fullName evidence="1">tRNA pseudouridine synthase B</fullName>
        <ecNumber evidence="1">5.4.99.25</ecNumber>
    </recommendedName>
    <alternativeName>
        <fullName evidence="1">tRNA pseudouridine(55) synthase</fullName>
        <shortName evidence="1">Psi55 synthase</shortName>
    </alternativeName>
    <alternativeName>
        <fullName evidence="1">tRNA pseudouridylate synthase</fullName>
    </alternativeName>
    <alternativeName>
        <fullName evidence="1">tRNA-uridine isomerase</fullName>
    </alternativeName>
</protein>
<feature type="chain" id="PRO_1000084610" description="tRNA pseudouridine synthase B">
    <location>
        <begin position="1"/>
        <end position="301"/>
    </location>
</feature>
<feature type="active site" description="Nucleophile" evidence="1">
    <location>
        <position position="38"/>
    </location>
</feature>
<proteinExistence type="inferred from homology"/>
<dbReference type="EC" id="5.4.99.25" evidence="1"/>
<dbReference type="EMBL" id="CP000423">
    <property type="protein sequence ID" value="ABJ70344.1"/>
    <property type="molecule type" value="Genomic_DNA"/>
</dbReference>
<dbReference type="RefSeq" id="WP_003565758.1">
    <property type="nucleotide sequence ID" value="NC_008526.1"/>
</dbReference>
<dbReference type="RefSeq" id="YP_806786.1">
    <property type="nucleotide sequence ID" value="NC_008526.1"/>
</dbReference>
<dbReference type="SMR" id="Q038M8"/>
<dbReference type="STRING" id="321967.LSEI_1570"/>
<dbReference type="PaxDb" id="321967-LSEI_1570"/>
<dbReference type="GeneID" id="57090224"/>
<dbReference type="KEGG" id="lca:LSEI_1570"/>
<dbReference type="PATRIC" id="fig|321967.11.peg.1550"/>
<dbReference type="HOGENOM" id="CLU_032087_0_1_9"/>
<dbReference type="Proteomes" id="UP000001651">
    <property type="component" value="Chromosome"/>
</dbReference>
<dbReference type="GO" id="GO:0003723">
    <property type="term" value="F:RNA binding"/>
    <property type="evidence" value="ECO:0007669"/>
    <property type="project" value="InterPro"/>
</dbReference>
<dbReference type="GO" id="GO:0160148">
    <property type="term" value="F:tRNA pseudouridine(55) synthase activity"/>
    <property type="evidence" value="ECO:0007669"/>
    <property type="project" value="UniProtKB-EC"/>
</dbReference>
<dbReference type="GO" id="GO:1990481">
    <property type="term" value="P:mRNA pseudouridine synthesis"/>
    <property type="evidence" value="ECO:0007669"/>
    <property type="project" value="TreeGrafter"/>
</dbReference>
<dbReference type="GO" id="GO:0031119">
    <property type="term" value="P:tRNA pseudouridine synthesis"/>
    <property type="evidence" value="ECO:0007669"/>
    <property type="project" value="UniProtKB-UniRule"/>
</dbReference>
<dbReference type="CDD" id="cd02573">
    <property type="entry name" value="PseudoU_synth_EcTruB"/>
    <property type="match status" value="1"/>
</dbReference>
<dbReference type="FunFam" id="3.30.2350.10:FF:000011">
    <property type="entry name" value="tRNA pseudouridine synthase B"/>
    <property type="match status" value="1"/>
</dbReference>
<dbReference type="Gene3D" id="3.30.2350.10">
    <property type="entry name" value="Pseudouridine synthase"/>
    <property type="match status" value="1"/>
</dbReference>
<dbReference type="HAMAP" id="MF_01080">
    <property type="entry name" value="TruB_bact"/>
    <property type="match status" value="1"/>
</dbReference>
<dbReference type="InterPro" id="IPR020103">
    <property type="entry name" value="PsdUridine_synth_cat_dom_sf"/>
</dbReference>
<dbReference type="InterPro" id="IPR002501">
    <property type="entry name" value="PsdUridine_synth_N"/>
</dbReference>
<dbReference type="InterPro" id="IPR014780">
    <property type="entry name" value="tRNA_psdUridine_synth_TruB"/>
</dbReference>
<dbReference type="InterPro" id="IPR032819">
    <property type="entry name" value="TruB_C"/>
</dbReference>
<dbReference type="NCBIfam" id="TIGR00431">
    <property type="entry name" value="TruB"/>
    <property type="match status" value="1"/>
</dbReference>
<dbReference type="PANTHER" id="PTHR13767:SF2">
    <property type="entry name" value="PSEUDOURIDYLATE SYNTHASE TRUB1"/>
    <property type="match status" value="1"/>
</dbReference>
<dbReference type="PANTHER" id="PTHR13767">
    <property type="entry name" value="TRNA-PSEUDOURIDINE SYNTHASE"/>
    <property type="match status" value="1"/>
</dbReference>
<dbReference type="Pfam" id="PF16198">
    <property type="entry name" value="TruB_C_2"/>
    <property type="match status" value="1"/>
</dbReference>
<dbReference type="Pfam" id="PF01509">
    <property type="entry name" value="TruB_N"/>
    <property type="match status" value="1"/>
</dbReference>
<dbReference type="SUPFAM" id="SSF55120">
    <property type="entry name" value="Pseudouridine synthase"/>
    <property type="match status" value="1"/>
</dbReference>
<accession>Q038M8</accession>
<sequence length="301" mass="32746">MNGILPLYKPTGMTSADAVYHARKILGIKKIGHSGTLDPNVDGVLPLAIGAGTKAVPQLMASGKVYTGEITLGFATTTEDLDGEVVDKTPLTQPFTADQLDAALTAWTGNITQIPPMFSAVKVNGRRLYEYARAGETVKRPERQATVSQFTRTDEPVFSATDGTQRFRFEVHVSKGTYIRTLAVDVGKTLGVAAVMSQLTRVKSGGFTLKQAVSIEQLKAHAAAGTLADVIQPIDIAFADLPQVDLTVEQFEAISHGRFLSLDQQTPRVRLHFAGVLKAIYRREDDQYRPDLMFLANEKNV</sequence>